<evidence type="ECO:0000250" key="1"/>
<evidence type="ECO:0000250" key="2">
    <source>
        <dbReference type="UniProtKB" id="P0C6L3"/>
    </source>
</evidence>
<evidence type="ECO:0000250" key="3">
    <source>
        <dbReference type="UniProtKB" id="P29996"/>
    </source>
</evidence>
<evidence type="ECO:0000255" key="4"/>
<evidence type="ECO:0000255" key="5">
    <source>
        <dbReference type="PROSITE-ProRule" id="PRU01183"/>
    </source>
</evidence>
<evidence type="ECO:0000256" key="6">
    <source>
        <dbReference type="SAM" id="MobiDB-lite"/>
    </source>
</evidence>
<evidence type="ECO:0000269" key="7">
    <source>
    </source>
</evidence>
<evidence type="ECO:0000305" key="8"/>
<accession>P0C6M4</accession>
<name>LHDAG_HDVTW</name>
<protein>
    <recommendedName>
        <fullName>Large delta antigen</fullName>
        <shortName>L-HDAg</shortName>
    </recommendedName>
    <alternativeName>
        <fullName>p27</fullName>
    </alternativeName>
</protein>
<dbReference type="EMBL" id="AF104264">
    <property type="protein sequence ID" value="AAG26088.1"/>
    <property type="molecule type" value="Genomic_RNA"/>
</dbReference>
<dbReference type="SMR" id="P0C6M4"/>
<dbReference type="Proteomes" id="UP000008113">
    <property type="component" value="Segment"/>
</dbReference>
<dbReference type="GO" id="GO:0043657">
    <property type="term" value="C:host cell"/>
    <property type="evidence" value="ECO:0007669"/>
    <property type="project" value="GOC"/>
</dbReference>
<dbReference type="GO" id="GO:0044196">
    <property type="term" value="C:host cell nucleolus"/>
    <property type="evidence" value="ECO:0007669"/>
    <property type="project" value="UniProtKB-SubCell"/>
</dbReference>
<dbReference type="GO" id="GO:0044423">
    <property type="term" value="C:virion component"/>
    <property type="evidence" value="ECO:0007669"/>
    <property type="project" value="UniProtKB-KW"/>
</dbReference>
<dbReference type="GO" id="GO:0003723">
    <property type="term" value="F:RNA binding"/>
    <property type="evidence" value="ECO:0007669"/>
    <property type="project" value="UniProtKB-KW"/>
</dbReference>
<dbReference type="GO" id="GO:0046718">
    <property type="term" value="P:symbiont entry into host cell"/>
    <property type="evidence" value="ECO:0007669"/>
    <property type="project" value="UniProtKB-KW"/>
</dbReference>
<dbReference type="GO" id="GO:0075732">
    <property type="term" value="P:viral penetration into host nucleus"/>
    <property type="evidence" value="ECO:0007669"/>
    <property type="project" value="UniProtKB-KW"/>
</dbReference>
<dbReference type="Gene3D" id="4.10.220.40">
    <property type="entry name" value="Delta antigen, N-terminal"/>
    <property type="match status" value="1"/>
</dbReference>
<dbReference type="InterPro" id="IPR027403">
    <property type="entry name" value="Delta_antigen_N"/>
</dbReference>
<dbReference type="InterPro" id="IPR037517">
    <property type="entry name" value="HDAG_dom"/>
</dbReference>
<dbReference type="InterPro" id="IPR002506">
    <property type="entry name" value="HDV_ag"/>
</dbReference>
<dbReference type="Pfam" id="PF01517">
    <property type="entry name" value="HDV_ag"/>
    <property type="match status" value="1"/>
</dbReference>
<dbReference type="SUPFAM" id="SSF58108">
    <property type="entry name" value="Oligomerization domain of hepatitis delta antigen"/>
    <property type="match status" value="1"/>
</dbReference>
<dbReference type="PROSITE" id="PS51838">
    <property type="entry name" value="HDAG"/>
    <property type="match status" value="1"/>
</dbReference>
<sequence length="214" mass="24132">MSQSESKKNRRGGREDILEKWITTRRKAEELEKDLRKARKTIKKLEDENPWLGNIIGIIRKGKDGEGAPPAKRPRTDQMEIDSGTGKRPHKSGFTDKEREDHRRRKALENKKKQLSSGGKNLSREEEEELGRLTVEDEERRRRVAGPRTGDVNLSGGGPRGAPGGGFVPRMEGVPESPFTRTGEGLDIRGNQGFPWVRPSPPQQRLPLLECTPQ</sequence>
<organismHost>
    <name type="scientific">Homo sapiens</name>
    <name type="common">Human</name>
    <dbReference type="NCBI Taxonomy" id="9606"/>
</organismHost>
<organism>
    <name type="scientific">Hepatitis delta virus genotype II (isolate TW2476)</name>
    <name type="common">HDV</name>
    <dbReference type="NCBI Taxonomy" id="261992"/>
    <lineage>
        <taxon>Viruses</taxon>
        <taxon>Ribozyviria</taxon>
        <taxon>Kolmioviridae</taxon>
        <taxon>Deltavirus</taxon>
        <taxon>Hepatitis delta virus</taxon>
    </lineage>
</organism>
<reference key="1">
    <citation type="journal article" date="1999" name="Mol. Biol. Evol.">
        <title>Recombination of hepatitis D virus RNA sequences and its implications.</title>
        <authorList>
            <person name="Wu J.-C."/>
            <person name="Chiang T.-Y."/>
            <person name="Shiue W.-K."/>
            <person name="Wang S.-Y."/>
            <person name="Sheen I.-J."/>
            <person name="Huang Y.-H."/>
            <person name="Syu W.-J."/>
        </authorList>
    </citation>
    <scope>NUCLEOTIDE SEQUENCE [GENOMIC RNA]</scope>
    <scope>RNA EDITING</scope>
</reference>
<reference key="2">
    <citation type="journal article" date="2005" name="Acta Virol.">
        <title>Hepatitis D.</title>
        <authorList>
            <person name="Husa P."/>
            <person name="Linhartova A."/>
            <person name="Nemecek V."/>
            <person name="Husova L."/>
        </authorList>
    </citation>
    <scope>REVIEW</scope>
</reference>
<reference key="3">
    <citation type="journal article" date="2006" name="Curr. Top. Microbiol. Immunol.">
        <title>Post-translational modification of delta antigen of hepatitis D virus.</title>
        <authorList>
            <person name="Huang W.H."/>
            <person name="Chen C.W."/>
            <person name="Wu H.L."/>
            <person name="Chen P.J."/>
        </authorList>
    </citation>
    <scope>REVIEW</scope>
</reference>
<keyword id="KW-0007">Acetylation</keyword>
<keyword id="KW-1048">Host nucleus</keyword>
<keyword id="KW-0449">Lipoprotein</keyword>
<keyword id="KW-0488">Methylation</keyword>
<keyword id="KW-0597">Phosphoprotein</keyword>
<keyword id="KW-0636">Prenylation</keyword>
<keyword id="KW-0691">RNA editing</keyword>
<keyword id="KW-0694">RNA-binding</keyword>
<keyword id="KW-1163">Viral penetration into host nucleus</keyword>
<keyword id="KW-0946">Virion</keyword>
<keyword id="KW-1160">Virus entry into host cell</keyword>
<feature type="chain" id="PRO_0000038148" description="Large delta antigen">
    <location>
        <begin position="1"/>
        <end position="211"/>
    </location>
</feature>
<feature type="propeptide" id="PRO_0000396679" description="Removed in mature form" evidence="3">
    <location>
        <begin position="212"/>
        <end position="214"/>
    </location>
</feature>
<feature type="domain" description="HDAg" evidence="5">
    <location>
        <begin position="21"/>
        <end position="195"/>
    </location>
</feature>
<feature type="region of interest" description="Dimerization" evidence="4">
    <location>
        <begin position="13"/>
        <end position="60"/>
    </location>
</feature>
<feature type="region of interest" description="Disordered" evidence="6">
    <location>
        <begin position="59"/>
        <end position="214"/>
    </location>
</feature>
<feature type="region of interest" description="RNA-binding" evidence="5">
    <location>
        <begin position="97"/>
        <end position="107"/>
    </location>
</feature>
<feature type="region of interest" description="RNAPII-binding" evidence="5">
    <location>
        <begin position="130"/>
        <end position="195"/>
    </location>
</feature>
<feature type="region of interest" description="RNA-binding" evidence="5">
    <location>
        <begin position="136"/>
        <end position="146"/>
    </location>
</feature>
<feature type="short sequence motif" description="Nuclear localization signal" evidence="3">
    <location>
        <begin position="66"/>
        <end position="75"/>
    </location>
</feature>
<feature type="compositionally biased region" description="Basic and acidic residues" evidence="6">
    <location>
        <begin position="93"/>
        <end position="112"/>
    </location>
</feature>
<feature type="compositionally biased region" description="Basic and acidic residues" evidence="6">
    <location>
        <begin position="130"/>
        <end position="141"/>
    </location>
</feature>
<feature type="compositionally biased region" description="Gly residues" evidence="6">
    <location>
        <begin position="155"/>
        <end position="167"/>
    </location>
</feature>
<feature type="compositionally biased region" description="Low complexity" evidence="6">
    <location>
        <begin position="205"/>
        <end position="214"/>
    </location>
</feature>
<feature type="modified residue" description="Phosphoserine; by host" evidence="3">
    <location>
        <position position="2"/>
    </location>
</feature>
<feature type="modified residue" description="Omega-N-methylated arginine; by host" evidence="2">
    <location>
        <position position="14"/>
    </location>
</feature>
<feature type="modified residue" description="N6-acetyllysine; by host" evidence="2">
    <location>
        <position position="72"/>
    </location>
</feature>
<feature type="modified residue" description="Phosphoserine; by host" evidence="3">
    <location>
        <position position="123"/>
    </location>
</feature>
<feature type="modified residue" description="Phosphoserine; by host" evidence="3">
    <location>
        <position position="177"/>
    </location>
</feature>
<feature type="modified residue" description="Cysteine methyl ester; by host" evidence="3">
    <location>
        <position position="211"/>
    </location>
</feature>
<feature type="lipid moiety-binding region" description="S-farnesyl cysteine; by host" evidence="3">
    <location>
        <position position="211"/>
    </location>
</feature>
<proteinExistence type="inferred from homology"/>
<comment type="function">
    <text evidence="1">Following virus entry into host cell, provides nuclear import of HDV RNPs thanks to its nuclear localization signal. Needs co-infection with hepatitis B virus to provide surface proteins, otherwise there is no packaging or budding. Packages the HDV ribonucleoprotein in hepatitis B virus empty particles. Interacts with both HDV genomic RNA and cytoplasmic tail of HBsAg. May inhibit viral RNA replication (By similarity).</text>
</comment>
<comment type="subunit">
    <text evidence="1">Homodimer. Homooctamer. Interacts with HBV HBsAg. May interact with clathrin to induce virion budding (By similarity).</text>
</comment>
<comment type="subcellular location">
    <subcellularLocation>
        <location>Virion</location>
    </subcellularLocation>
    <subcellularLocation>
        <location>Host nucleus</location>
        <location>Host nucleolus</location>
    </subcellularLocation>
    <text evidence="1">isoprenylated in the cytoplasm, and translocates in the nucleus possibly after phosphorylation. Translocates after to nuclear speckle, then to the ER membrane where interaction with Hepatitis B virus antigene takes place (By similarity).</text>
</comment>
<comment type="PTM">
    <text evidence="1">Prenylated by host farnesyl-transferase in the cytoplasm prior to nucleus translocation.</text>
</comment>
<comment type="PTM">
    <text evidence="1">Phosphorylated at serines by host CK2 and other kinases. phosphorylation does not seem to be important for its function (By similarity).</text>
</comment>
<comment type="RNA editing">
    <location>
        <position position="196" evidence="7"/>
    </location>
    <text evidence="1">Partially edited. RNA editing at this position occurs on the antigenomic strand and consists of a conversion of A to G catalyzed by the cellular enzyme ADAR1. The unedited RNA version gives rise to the small delta antigen (AC Q9E925), which ends with a nonsense codon at position 196. In the edited version, this amber codon is modified to a tryptophan codon and gives rise to the large delta antigen protein. S-HDAg suppresses editing of non-replicating antigenomic RNA, thereby regulating the extent of editing (By similarity).</text>
</comment>
<comment type="miscellaneous">
    <text>This strains belongs to the genotype II found only in East Asia.</text>
</comment>
<comment type="similarity">
    <text evidence="8">Belongs to the hepatitis delta antigen family.</text>
</comment>